<comment type="similarity">
    <text evidence="2">To K.pneumoniae RomA.</text>
</comment>
<dbReference type="EMBL" id="LT708304">
    <property type="protein sequence ID" value="SIT99528.1"/>
    <property type="molecule type" value="Genomic_DNA"/>
</dbReference>
<dbReference type="RefSeq" id="NP_854587.1">
    <property type="nucleotide sequence ID" value="NC_002945.3"/>
</dbReference>
<dbReference type="RefSeq" id="WP_003404705.1">
    <property type="nucleotide sequence ID" value="NC_002945.4"/>
</dbReference>
<dbReference type="SMR" id="P64760"/>
<dbReference type="KEGG" id="mbo:BQ2027_MB0930"/>
<dbReference type="PATRIC" id="fig|233413.5.peg.1011"/>
<dbReference type="Proteomes" id="UP000001419">
    <property type="component" value="Chromosome"/>
</dbReference>
<dbReference type="GO" id="GO:0005737">
    <property type="term" value="C:cytoplasm"/>
    <property type="evidence" value="ECO:0007669"/>
    <property type="project" value="TreeGrafter"/>
</dbReference>
<dbReference type="GO" id="GO:0070290">
    <property type="term" value="F:N-acylphosphatidylethanolamine-specific phospholipase D activity"/>
    <property type="evidence" value="ECO:0007669"/>
    <property type="project" value="InterPro"/>
</dbReference>
<dbReference type="GO" id="GO:0008270">
    <property type="term" value="F:zinc ion binding"/>
    <property type="evidence" value="ECO:0007669"/>
    <property type="project" value="InterPro"/>
</dbReference>
<dbReference type="Gene3D" id="3.60.15.10">
    <property type="entry name" value="Ribonuclease Z/Hydroxyacylglutathione hydrolase-like"/>
    <property type="match status" value="1"/>
</dbReference>
<dbReference type="InterPro" id="IPR001279">
    <property type="entry name" value="Metallo-B-lactamas"/>
</dbReference>
<dbReference type="InterPro" id="IPR024884">
    <property type="entry name" value="NAPE-PLD"/>
</dbReference>
<dbReference type="InterPro" id="IPR036866">
    <property type="entry name" value="RibonucZ/Hydroxyglut_hydro"/>
</dbReference>
<dbReference type="PANTHER" id="PTHR15032">
    <property type="entry name" value="N-ACYL-PHOSPHATIDYLETHANOLAMINE-HYDROLYZING PHOSPHOLIPASE D"/>
    <property type="match status" value="1"/>
</dbReference>
<dbReference type="PANTHER" id="PTHR15032:SF4">
    <property type="entry name" value="N-ACYL-PHOSPHATIDYLETHANOLAMINE-HYDROLYZING PHOSPHOLIPASE D"/>
    <property type="match status" value="1"/>
</dbReference>
<dbReference type="Pfam" id="PF12706">
    <property type="entry name" value="Lactamase_B_2"/>
    <property type="match status" value="1"/>
</dbReference>
<dbReference type="PIRSF" id="PIRSF038896">
    <property type="entry name" value="NAPE-PLD"/>
    <property type="match status" value="1"/>
</dbReference>
<dbReference type="SUPFAM" id="SSF56281">
    <property type="entry name" value="Metallo-hydrolase/oxidoreductase"/>
    <property type="match status" value="1"/>
</dbReference>
<proteinExistence type="inferred from homology"/>
<sequence>MVRRALRLAAGTASLAAGTWLLRALHGTPAALGADAASIRAVSEQSPNYRDGAFVNLDPASMFTLDREELRLIVWELVARHSASRPAAPIPLASPNIYRGDASRLAVSWFGHSTALLEIDGYRVLTDPVWSDRCSPSDVVGPQRLHPPPVQLAALPAVDAVVISHDHYDHLDIDTVVALVGMQRAPFLVPLGVGAHLRSWGVPQDRIVELDWNQSAQVDELTVVCVPARHFSGRFLSRNTTLWASWAFVGPNHRAYFGGDTGYTKSFTQIGADHGPFDLTLLPIGAYNTAWPDIHMNPEEAVRAHLDVTDSGSGMLVPVHWGTFRLAPHPWGEPVERLLAAAEPEHVTVAVPLPGQRVDPTGPMRLHPWWRL</sequence>
<reference key="1">
    <citation type="journal article" date="2003" name="Proc. Natl. Acad. Sci. U.S.A.">
        <title>The complete genome sequence of Mycobacterium bovis.</title>
        <authorList>
            <person name="Garnier T."/>
            <person name="Eiglmeier K."/>
            <person name="Camus J.-C."/>
            <person name="Medina N."/>
            <person name="Mansoor H."/>
            <person name="Pryor M."/>
            <person name="Duthoy S."/>
            <person name="Grondin S."/>
            <person name="Lacroix C."/>
            <person name="Monsempe C."/>
            <person name="Simon S."/>
            <person name="Harris B."/>
            <person name="Atkin R."/>
            <person name="Doggett J."/>
            <person name="Mayes R."/>
            <person name="Keating L."/>
            <person name="Wheeler P.R."/>
            <person name="Parkhill J."/>
            <person name="Barrell B.G."/>
            <person name="Cole S.T."/>
            <person name="Gordon S.V."/>
            <person name="Hewinson R.G."/>
        </authorList>
    </citation>
    <scope>NUCLEOTIDE SEQUENCE [LARGE SCALE GENOMIC DNA]</scope>
    <source>
        <strain>ATCC BAA-935 / AF2122/97</strain>
    </source>
</reference>
<reference key="2">
    <citation type="journal article" date="2017" name="Genome Announc.">
        <title>Updated reference genome sequence and annotation of Mycobacterium bovis AF2122/97.</title>
        <authorList>
            <person name="Malone K.M."/>
            <person name="Farrell D."/>
            <person name="Stuber T.P."/>
            <person name="Schubert O.T."/>
            <person name="Aebersold R."/>
            <person name="Robbe-Austerman S."/>
            <person name="Gordon S.V."/>
        </authorList>
    </citation>
    <scope>NUCLEOTIDE SEQUENCE [LARGE SCALE GENOMIC DNA]</scope>
    <scope>GENOME REANNOTATION</scope>
    <source>
        <strain>ATCC BAA-935 / AF2122/97</strain>
    </source>
</reference>
<name>Y930_MYCBO</name>
<organism>
    <name type="scientific">Mycobacterium bovis (strain ATCC BAA-935 / AF2122/97)</name>
    <dbReference type="NCBI Taxonomy" id="233413"/>
    <lineage>
        <taxon>Bacteria</taxon>
        <taxon>Bacillati</taxon>
        <taxon>Actinomycetota</taxon>
        <taxon>Actinomycetes</taxon>
        <taxon>Mycobacteriales</taxon>
        <taxon>Mycobacteriaceae</taxon>
        <taxon>Mycobacterium</taxon>
        <taxon>Mycobacterium tuberculosis complex</taxon>
    </lineage>
</organism>
<protein>
    <recommendedName>
        <fullName>Uncharacterized protein Mb0930</fullName>
    </recommendedName>
</protein>
<accession>P64760</accession>
<accession>A0A1R3XWR4</accession>
<accession>Q10562</accession>
<accession>X2BGG4</accession>
<evidence type="ECO:0000255" key="1"/>
<evidence type="ECO:0000305" key="2"/>
<feature type="signal peptide" evidence="1">
    <location>
        <begin position="1"/>
        <end position="33"/>
    </location>
</feature>
<feature type="chain" id="PRO_0000014086" description="Uncharacterized protein Mb0930">
    <location>
        <begin position="34"/>
        <end position="372"/>
    </location>
</feature>
<gene>
    <name type="ordered locus">BQ2027_MB0930</name>
</gene>
<keyword id="KW-1185">Reference proteome</keyword>
<keyword id="KW-0732">Signal</keyword>